<reference key="1">
    <citation type="journal article" date="2008" name="J. Bacteriol.">
        <title>Complete genome sequence of Leuconostoc citreum KM20.</title>
        <authorList>
            <person name="Kim J.F."/>
            <person name="Jeong H."/>
            <person name="Lee J.-S."/>
            <person name="Choi S.-H."/>
            <person name="Ha M."/>
            <person name="Hur C.-G."/>
            <person name="Kim J.-S."/>
            <person name="Lee S."/>
            <person name="Park H.-S."/>
            <person name="Park Y.-H."/>
            <person name="Oh T.K."/>
        </authorList>
    </citation>
    <scope>NUCLEOTIDE SEQUENCE [LARGE SCALE GENOMIC DNA]</scope>
    <source>
        <strain>KM20</strain>
    </source>
</reference>
<gene>
    <name evidence="1" type="primary">thrB</name>
    <name type="ordered locus">LCK_00722</name>
</gene>
<accession>B1MYF2</accession>
<organism>
    <name type="scientific">Leuconostoc citreum (strain KM20)</name>
    <dbReference type="NCBI Taxonomy" id="349519"/>
    <lineage>
        <taxon>Bacteria</taxon>
        <taxon>Bacillati</taxon>
        <taxon>Bacillota</taxon>
        <taxon>Bacilli</taxon>
        <taxon>Lactobacillales</taxon>
        <taxon>Lactobacillaceae</taxon>
        <taxon>Leuconostoc</taxon>
    </lineage>
</organism>
<dbReference type="EC" id="2.7.1.39" evidence="1"/>
<dbReference type="EMBL" id="DQ489736">
    <property type="protein sequence ID" value="ACA82554.1"/>
    <property type="molecule type" value="Genomic_DNA"/>
</dbReference>
<dbReference type="RefSeq" id="WP_004906992.1">
    <property type="nucleotide sequence ID" value="NC_010471.1"/>
</dbReference>
<dbReference type="SMR" id="B1MYF2"/>
<dbReference type="STRING" id="349519.LCK_00722"/>
<dbReference type="KEGG" id="lci:LCK_00722"/>
<dbReference type="eggNOG" id="COG0083">
    <property type="taxonomic scope" value="Bacteria"/>
</dbReference>
<dbReference type="HOGENOM" id="CLU_041243_0_0_9"/>
<dbReference type="OrthoDB" id="9769912at2"/>
<dbReference type="UniPathway" id="UPA00050">
    <property type="reaction ID" value="UER00064"/>
</dbReference>
<dbReference type="Proteomes" id="UP000002166">
    <property type="component" value="Chromosome"/>
</dbReference>
<dbReference type="GO" id="GO:0005737">
    <property type="term" value="C:cytoplasm"/>
    <property type="evidence" value="ECO:0007669"/>
    <property type="project" value="UniProtKB-SubCell"/>
</dbReference>
<dbReference type="GO" id="GO:0005524">
    <property type="term" value="F:ATP binding"/>
    <property type="evidence" value="ECO:0007669"/>
    <property type="project" value="UniProtKB-UniRule"/>
</dbReference>
<dbReference type="GO" id="GO:0004413">
    <property type="term" value="F:homoserine kinase activity"/>
    <property type="evidence" value="ECO:0007669"/>
    <property type="project" value="UniProtKB-UniRule"/>
</dbReference>
<dbReference type="GO" id="GO:0009088">
    <property type="term" value="P:threonine biosynthetic process"/>
    <property type="evidence" value="ECO:0007669"/>
    <property type="project" value="UniProtKB-UniRule"/>
</dbReference>
<dbReference type="Gene3D" id="3.30.230.10">
    <property type="match status" value="1"/>
</dbReference>
<dbReference type="Gene3D" id="3.30.70.890">
    <property type="entry name" value="GHMP kinase, C-terminal domain"/>
    <property type="match status" value="1"/>
</dbReference>
<dbReference type="HAMAP" id="MF_00384">
    <property type="entry name" value="Homoser_kinase"/>
    <property type="match status" value="1"/>
</dbReference>
<dbReference type="InterPro" id="IPR013750">
    <property type="entry name" value="GHMP_kinase_C_dom"/>
</dbReference>
<dbReference type="InterPro" id="IPR036554">
    <property type="entry name" value="GHMP_kinase_C_sf"/>
</dbReference>
<dbReference type="InterPro" id="IPR006204">
    <property type="entry name" value="GHMP_kinase_N_dom"/>
</dbReference>
<dbReference type="InterPro" id="IPR006203">
    <property type="entry name" value="GHMP_knse_ATP-bd_CS"/>
</dbReference>
<dbReference type="InterPro" id="IPR000870">
    <property type="entry name" value="Homoserine_kinase"/>
</dbReference>
<dbReference type="InterPro" id="IPR020568">
    <property type="entry name" value="Ribosomal_Su5_D2-typ_SF"/>
</dbReference>
<dbReference type="InterPro" id="IPR014721">
    <property type="entry name" value="Ribsml_uS5_D2-typ_fold_subgr"/>
</dbReference>
<dbReference type="NCBIfam" id="TIGR00191">
    <property type="entry name" value="thrB"/>
    <property type="match status" value="1"/>
</dbReference>
<dbReference type="PANTHER" id="PTHR20861:SF1">
    <property type="entry name" value="HOMOSERINE KINASE"/>
    <property type="match status" value="1"/>
</dbReference>
<dbReference type="PANTHER" id="PTHR20861">
    <property type="entry name" value="HOMOSERINE/4-DIPHOSPHOCYTIDYL-2-C-METHYL-D-ERYTHRITOL KINASE"/>
    <property type="match status" value="1"/>
</dbReference>
<dbReference type="Pfam" id="PF08544">
    <property type="entry name" value="GHMP_kinases_C"/>
    <property type="match status" value="1"/>
</dbReference>
<dbReference type="Pfam" id="PF00288">
    <property type="entry name" value="GHMP_kinases_N"/>
    <property type="match status" value="1"/>
</dbReference>
<dbReference type="PIRSF" id="PIRSF000676">
    <property type="entry name" value="Homoser_kin"/>
    <property type="match status" value="1"/>
</dbReference>
<dbReference type="PRINTS" id="PR00958">
    <property type="entry name" value="HOMSERKINASE"/>
</dbReference>
<dbReference type="SUPFAM" id="SSF55060">
    <property type="entry name" value="GHMP Kinase, C-terminal domain"/>
    <property type="match status" value="1"/>
</dbReference>
<dbReference type="SUPFAM" id="SSF54211">
    <property type="entry name" value="Ribosomal protein S5 domain 2-like"/>
    <property type="match status" value="1"/>
</dbReference>
<dbReference type="PROSITE" id="PS00627">
    <property type="entry name" value="GHMP_KINASES_ATP"/>
    <property type="match status" value="1"/>
</dbReference>
<comment type="function">
    <text evidence="1">Catalyzes the ATP-dependent phosphorylation of L-homoserine to L-homoserine phosphate.</text>
</comment>
<comment type="catalytic activity">
    <reaction evidence="1">
        <text>L-homoserine + ATP = O-phospho-L-homoserine + ADP + H(+)</text>
        <dbReference type="Rhea" id="RHEA:13985"/>
        <dbReference type="ChEBI" id="CHEBI:15378"/>
        <dbReference type="ChEBI" id="CHEBI:30616"/>
        <dbReference type="ChEBI" id="CHEBI:57476"/>
        <dbReference type="ChEBI" id="CHEBI:57590"/>
        <dbReference type="ChEBI" id="CHEBI:456216"/>
        <dbReference type="EC" id="2.7.1.39"/>
    </reaction>
</comment>
<comment type="pathway">
    <text evidence="1">Amino-acid biosynthesis; L-threonine biosynthesis; L-threonine from L-aspartate: step 4/5.</text>
</comment>
<comment type="subcellular location">
    <subcellularLocation>
        <location evidence="1">Cytoplasm</location>
    </subcellularLocation>
</comment>
<comment type="similarity">
    <text evidence="1">Belongs to the GHMP kinase family. Homoserine kinase subfamily.</text>
</comment>
<proteinExistence type="inferred from homology"/>
<evidence type="ECO:0000255" key="1">
    <source>
        <dbReference type="HAMAP-Rule" id="MF_00384"/>
    </source>
</evidence>
<feature type="chain" id="PRO_1000122429" description="Homoserine kinase">
    <location>
        <begin position="1"/>
        <end position="291"/>
    </location>
</feature>
<feature type="binding site" evidence="1">
    <location>
        <begin position="79"/>
        <end position="89"/>
    </location>
    <ligand>
        <name>ATP</name>
        <dbReference type="ChEBI" id="CHEBI:30616"/>
    </ligand>
</feature>
<protein>
    <recommendedName>
        <fullName evidence="1">Homoserine kinase</fullName>
        <shortName evidence="1">HK</shortName>
        <shortName evidence="1">HSK</shortName>
        <ecNumber evidence="1">2.7.1.39</ecNumber>
    </recommendedName>
</protein>
<sequence>MIKIKVPATSANIGPGFDSLGLALDLFLTLEIHEATTTWQVIHEEPDLPHDITHFIVQAALTLTSNMQPHRLVVKSDIPLARGLGSSSAALLAGLTMANILADLNLSPKEILKQATMLEGHPDNVAPALLGGAISAYYDGHQVYNSSFHIPENIIFTVFIPDYELKTAEARNALPDDFPFKKSIAGSAISNTLIAALANDDWQTAKQLIEKDQFHEQQRHHLVPHLLEIRHIAHQHDVLGTYLSGAGPTVITMAPENEAKILLPALTHLTTSGRTIQCHLNRSGLTITKEE</sequence>
<keyword id="KW-0028">Amino-acid biosynthesis</keyword>
<keyword id="KW-0067">ATP-binding</keyword>
<keyword id="KW-0963">Cytoplasm</keyword>
<keyword id="KW-0418">Kinase</keyword>
<keyword id="KW-0547">Nucleotide-binding</keyword>
<keyword id="KW-1185">Reference proteome</keyword>
<keyword id="KW-0791">Threonine biosynthesis</keyword>
<keyword id="KW-0808">Transferase</keyword>
<name>KHSE_LEUCK</name>